<comment type="function">
    <text evidence="1">Catalyzes the reductive methylation of 2'-deoxyuridine-5'-monophosphate (dUMP) to 2'-deoxythymidine-5'-monophosphate (dTMP) while utilizing 5,10-methylenetetrahydrofolate (mTHF) as the methyl donor and reductant in the reaction, yielding dihydrofolate (DHF) as a by-product. This enzymatic reaction provides an intracellular de novo source of dTMP, an essential precursor for DNA biosynthesis.</text>
</comment>
<comment type="catalytic activity">
    <reaction evidence="1">
        <text>dUMP + (6R)-5,10-methylene-5,6,7,8-tetrahydrofolate = 7,8-dihydrofolate + dTMP</text>
        <dbReference type="Rhea" id="RHEA:12104"/>
        <dbReference type="ChEBI" id="CHEBI:15636"/>
        <dbReference type="ChEBI" id="CHEBI:57451"/>
        <dbReference type="ChEBI" id="CHEBI:63528"/>
        <dbReference type="ChEBI" id="CHEBI:246422"/>
        <dbReference type="EC" id="2.1.1.45"/>
    </reaction>
</comment>
<comment type="pathway">
    <text evidence="1">Pyrimidine metabolism; dTTP biosynthesis.</text>
</comment>
<comment type="subunit">
    <text evidence="1">Homodimer.</text>
</comment>
<comment type="subcellular location">
    <subcellularLocation>
        <location evidence="1">Cytoplasm</location>
    </subcellularLocation>
</comment>
<comment type="similarity">
    <text evidence="1">Belongs to the thymidylate synthase family. Bacterial-type ThyA subfamily.</text>
</comment>
<gene>
    <name evidence="1" type="primary">thyA</name>
    <name type="ordered locus">SGO_1143</name>
</gene>
<proteinExistence type="inferred from homology"/>
<dbReference type="EC" id="2.1.1.45" evidence="1"/>
<dbReference type="EMBL" id="CP000725">
    <property type="protein sequence ID" value="ABV10902.1"/>
    <property type="molecule type" value="Genomic_DNA"/>
</dbReference>
<dbReference type="RefSeq" id="WP_012000551.1">
    <property type="nucleotide sequence ID" value="NC_009785.1"/>
</dbReference>
<dbReference type="SMR" id="A8AXC2"/>
<dbReference type="STRING" id="467705.SGO_1143"/>
<dbReference type="KEGG" id="sgo:SGO_1143"/>
<dbReference type="eggNOG" id="COG0207">
    <property type="taxonomic scope" value="Bacteria"/>
</dbReference>
<dbReference type="HOGENOM" id="CLU_021669_0_0_9"/>
<dbReference type="UniPathway" id="UPA00575"/>
<dbReference type="Proteomes" id="UP000001131">
    <property type="component" value="Chromosome"/>
</dbReference>
<dbReference type="GO" id="GO:0005829">
    <property type="term" value="C:cytosol"/>
    <property type="evidence" value="ECO:0007669"/>
    <property type="project" value="TreeGrafter"/>
</dbReference>
<dbReference type="GO" id="GO:0004799">
    <property type="term" value="F:thymidylate synthase activity"/>
    <property type="evidence" value="ECO:0007669"/>
    <property type="project" value="UniProtKB-UniRule"/>
</dbReference>
<dbReference type="GO" id="GO:0006231">
    <property type="term" value="P:dTMP biosynthetic process"/>
    <property type="evidence" value="ECO:0007669"/>
    <property type="project" value="UniProtKB-UniRule"/>
</dbReference>
<dbReference type="GO" id="GO:0006235">
    <property type="term" value="P:dTTP biosynthetic process"/>
    <property type="evidence" value="ECO:0007669"/>
    <property type="project" value="UniProtKB-UniRule"/>
</dbReference>
<dbReference type="GO" id="GO:0032259">
    <property type="term" value="P:methylation"/>
    <property type="evidence" value="ECO:0007669"/>
    <property type="project" value="UniProtKB-KW"/>
</dbReference>
<dbReference type="CDD" id="cd00351">
    <property type="entry name" value="TS_Pyrimidine_HMase"/>
    <property type="match status" value="1"/>
</dbReference>
<dbReference type="FunFam" id="3.30.572.10:FF:000006">
    <property type="entry name" value="Thymidylate synthase"/>
    <property type="match status" value="1"/>
</dbReference>
<dbReference type="Gene3D" id="3.30.572.10">
    <property type="entry name" value="Thymidylate synthase/dCMP hydroxymethylase domain"/>
    <property type="match status" value="1"/>
</dbReference>
<dbReference type="HAMAP" id="MF_00008">
    <property type="entry name" value="Thymidy_synth_bact"/>
    <property type="match status" value="1"/>
</dbReference>
<dbReference type="InterPro" id="IPR045097">
    <property type="entry name" value="Thymidate_synth/dCMP_Mease"/>
</dbReference>
<dbReference type="InterPro" id="IPR023451">
    <property type="entry name" value="Thymidate_synth/dCMP_Mease_dom"/>
</dbReference>
<dbReference type="InterPro" id="IPR036926">
    <property type="entry name" value="Thymidate_synth/dCMP_Mease_sf"/>
</dbReference>
<dbReference type="InterPro" id="IPR000398">
    <property type="entry name" value="Thymidylate_synthase"/>
</dbReference>
<dbReference type="InterPro" id="IPR020940">
    <property type="entry name" value="Thymidylate_synthase_AS"/>
</dbReference>
<dbReference type="NCBIfam" id="NF002495">
    <property type="entry name" value="PRK01827.1-1"/>
    <property type="match status" value="1"/>
</dbReference>
<dbReference type="PANTHER" id="PTHR11548">
    <property type="entry name" value="THYMIDYLATE SYNTHASE 1"/>
    <property type="match status" value="1"/>
</dbReference>
<dbReference type="PANTHER" id="PTHR11548:SF1">
    <property type="entry name" value="THYMIDYLATE SYNTHASE 1"/>
    <property type="match status" value="1"/>
</dbReference>
<dbReference type="Pfam" id="PF00303">
    <property type="entry name" value="Thymidylat_synt"/>
    <property type="match status" value="1"/>
</dbReference>
<dbReference type="PRINTS" id="PR00108">
    <property type="entry name" value="THYMDSNTHASE"/>
</dbReference>
<dbReference type="SUPFAM" id="SSF55831">
    <property type="entry name" value="Thymidylate synthase/dCMP hydroxymethylase"/>
    <property type="match status" value="1"/>
</dbReference>
<dbReference type="PROSITE" id="PS00091">
    <property type="entry name" value="THYMIDYLATE_SYNTHASE"/>
    <property type="match status" value="1"/>
</dbReference>
<name>TYSY_STRGC</name>
<sequence>MTKADTIFKENIRRILKEGVFSENARPRYKDGNVANSKYITGSFAEYDLSKGEFPITTLRPIAIKSAIKEVLWIYQDQSNSLELLNDKYNVHYWNDWEVGDTGTIGQRYGAIVKKHDIINKILQQLAANPWNRRNIISLWDYEAFEETEGLLPCAFQTMFDVRRVDEDIYLDATLTQRSNDMLVAHHINAMQYVALQMMIAKHFGWKVGKFFYFINNLHIYDNQFEQAEELLRREPSDCQPRLVLNVPDGTNFFDIKAEDFELLDYDPVKPQLKFDLAI</sequence>
<reference key="1">
    <citation type="journal article" date="2007" name="J. Bacteriol.">
        <title>Genome-wide transcriptional changes in Streptococcus gordonii in response to competence signaling peptide.</title>
        <authorList>
            <person name="Vickerman M.M."/>
            <person name="Iobst S."/>
            <person name="Jesionowski A.M."/>
            <person name="Gill S.R."/>
        </authorList>
    </citation>
    <scope>NUCLEOTIDE SEQUENCE [LARGE SCALE GENOMIC DNA]</scope>
    <source>
        <strain>Challis / ATCC 35105 / BCRC 15272 / CH1 / DL1 / V288</strain>
    </source>
</reference>
<keyword id="KW-0963">Cytoplasm</keyword>
<keyword id="KW-0489">Methyltransferase</keyword>
<keyword id="KW-0545">Nucleotide biosynthesis</keyword>
<keyword id="KW-1185">Reference proteome</keyword>
<keyword id="KW-0808">Transferase</keyword>
<feature type="chain" id="PRO_1000073890" description="Thymidylate synthase">
    <location>
        <begin position="1"/>
        <end position="279"/>
    </location>
</feature>
<feature type="active site" description="Nucleophile" evidence="1">
    <location>
        <position position="154"/>
    </location>
</feature>
<feature type="binding site" evidence="1">
    <location>
        <begin position="133"/>
        <end position="134"/>
    </location>
    <ligand>
        <name>dUMP</name>
        <dbReference type="ChEBI" id="CHEBI:246422"/>
        <note>ligand shared between dimeric partners</note>
    </ligand>
</feature>
<feature type="binding site" description="in other chain" evidence="1">
    <location>
        <begin position="178"/>
        <end position="181"/>
    </location>
    <ligand>
        <name>dUMP</name>
        <dbReference type="ChEBI" id="CHEBI:246422"/>
        <note>ligand shared between dimeric partners</note>
    </ligand>
</feature>
<feature type="binding site" evidence="1">
    <location>
        <position position="181"/>
    </location>
    <ligand>
        <name>(6R)-5,10-methylene-5,6,7,8-tetrahydrofolate</name>
        <dbReference type="ChEBI" id="CHEBI:15636"/>
    </ligand>
</feature>
<feature type="binding site" description="in other chain" evidence="1">
    <location>
        <position position="189"/>
    </location>
    <ligand>
        <name>dUMP</name>
        <dbReference type="ChEBI" id="CHEBI:246422"/>
        <note>ligand shared between dimeric partners</note>
    </ligand>
</feature>
<feature type="binding site" description="in other chain" evidence="1">
    <location>
        <begin position="219"/>
        <end position="221"/>
    </location>
    <ligand>
        <name>dUMP</name>
        <dbReference type="ChEBI" id="CHEBI:246422"/>
        <note>ligand shared between dimeric partners</note>
    </ligand>
</feature>
<feature type="binding site" evidence="1">
    <location>
        <position position="278"/>
    </location>
    <ligand>
        <name>(6R)-5,10-methylene-5,6,7,8-tetrahydrofolate</name>
        <dbReference type="ChEBI" id="CHEBI:15636"/>
    </ligand>
</feature>
<protein>
    <recommendedName>
        <fullName evidence="1">Thymidylate synthase</fullName>
        <shortName evidence="1">TS</shortName>
        <shortName evidence="1">TSase</shortName>
        <ecNumber evidence="1">2.1.1.45</ecNumber>
    </recommendedName>
</protein>
<organism>
    <name type="scientific">Streptococcus gordonii (strain Challis / ATCC 35105 / BCRC 15272 / CH1 / DL1 / V288)</name>
    <dbReference type="NCBI Taxonomy" id="467705"/>
    <lineage>
        <taxon>Bacteria</taxon>
        <taxon>Bacillati</taxon>
        <taxon>Bacillota</taxon>
        <taxon>Bacilli</taxon>
        <taxon>Lactobacillales</taxon>
        <taxon>Streptococcaceae</taxon>
        <taxon>Streptococcus</taxon>
    </lineage>
</organism>
<accession>A8AXC2</accession>
<evidence type="ECO:0000255" key="1">
    <source>
        <dbReference type="HAMAP-Rule" id="MF_00008"/>
    </source>
</evidence>